<evidence type="ECO:0000255" key="1">
    <source>
        <dbReference type="HAMAP-Rule" id="MF_01197"/>
    </source>
</evidence>
<name>SEPF_RUMCH</name>
<reference key="1">
    <citation type="submission" date="2009-01" db="EMBL/GenBank/DDBJ databases">
        <title>Complete sequence of Clostridium cellulolyticum H10.</title>
        <authorList>
            <consortium name="US DOE Joint Genome Institute"/>
            <person name="Lucas S."/>
            <person name="Copeland A."/>
            <person name="Lapidus A."/>
            <person name="Glavina del Rio T."/>
            <person name="Dalin E."/>
            <person name="Tice H."/>
            <person name="Bruce D."/>
            <person name="Goodwin L."/>
            <person name="Pitluck S."/>
            <person name="Chertkov O."/>
            <person name="Saunders E."/>
            <person name="Brettin T."/>
            <person name="Detter J.C."/>
            <person name="Han C."/>
            <person name="Larimer F."/>
            <person name="Land M."/>
            <person name="Hauser L."/>
            <person name="Kyrpides N."/>
            <person name="Ivanova N."/>
            <person name="Zhou J."/>
            <person name="Richardson P."/>
        </authorList>
    </citation>
    <scope>NUCLEOTIDE SEQUENCE [LARGE SCALE GENOMIC DNA]</scope>
    <source>
        <strain>ATCC 35319 / DSM 5812 / JCM 6584 / H10</strain>
    </source>
</reference>
<organism>
    <name type="scientific">Ruminiclostridium cellulolyticum (strain ATCC 35319 / DSM 5812 / JCM 6584 / H10)</name>
    <name type="common">Clostridium cellulolyticum</name>
    <dbReference type="NCBI Taxonomy" id="394503"/>
    <lineage>
        <taxon>Bacteria</taxon>
        <taxon>Bacillati</taxon>
        <taxon>Bacillota</taxon>
        <taxon>Clostridia</taxon>
        <taxon>Eubacteriales</taxon>
        <taxon>Oscillospiraceae</taxon>
        <taxon>Ruminiclostridium</taxon>
    </lineage>
</organism>
<sequence length="156" mass="17782">MSKLLNKVFNFVGWEAVDEDEYEYDEQELNTKEEVKDEPIQTHFFNGSKKQQSGKVVNIHTGNQFKMIVSQPNTFDDAQDICDHLKNKKPVVINLEGIEKQDAQRIIDFLSGSVYALDGSIQKVSCDIFVIAPNNVDVSGDLKDELRNKTVFPWAK</sequence>
<accession>B8I754</accession>
<dbReference type="EMBL" id="CP001348">
    <property type="protein sequence ID" value="ACL74978.1"/>
    <property type="molecule type" value="Genomic_DNA"/>
</dbReference>
<dbReference type="RefSeq" id="WP_015924147.1">
    <property type="nucleotide sequence ID" value="NC_011898.1"/>
</dbReference>
<dbReference type="SMR" id="B8I754"/>
<dbReference type="STRING" id="394503.Ccel_0597"/>
<dbReference type="KEGG" id="cce:Ccel_0597"/>
<dbReference type="eggNOG" id="COG1799">
    <property type="taxonomic scope" value="Bacteria"/>
</dbReference>
<dbReference type="HOGENOM" id="CLU_078499_4_0_9"/>
<dbReference type="OrthoDB" id="9815206at2"/>
<dbReference type="Proteomes" id="UP000001349">
    <property type="component" value="Chromosome"/>
</dbReference>
<dbReference type="GO" id="GO:0005737">
    <property type="term" value="C:cytoplasm"/>
    <property type="evidence" value="ECO:0007669"/>
    <property type="project" value="UniProtKB-SubCell"/>
</dbReference>
<dbReference type="GO" id="GO:0000917">
    <property type="term" value="P:division septum assembly"/>
    <property type="evidence" value="ECO:0007669"/>
    <property type="project" value="UniProtKB-KW"/>
</dbReference>
<dbReference type="GO" id="GO:0043093">
    <property type="term" value="P:FtsZ-dependent cytokinesis"/>
    <property type="evidence" value="ECO:0007669"/>
    <property type="project" value="UniProtKB-UniRule"/>
</dbReference>
<dbReference type="Gene3D" id="3.30.110.150">
    <property type="entry name" value="SepF-like protein"/>
    <property type="match status" value="1"/>
</dbReference>
<dbReference type="HAMAP" id="MF_01197">
    <property type="entry name" value="SepF"/>
    <property type="match status" value="1"/>
</dbReference>
<dbReference type="InterPro" id="IPR023052">
    <property type="entry name" value="Cell_div_SepF"/>
</dbReference>
<dbReference type="InterPro" id="IPR007561">
    <property type="entry name" value="Cell_div_SepF/SepF-rel"/>
</dbReference>
<dbReference type="InterPro" id="IPR038594">
    <property type="entry name" value="SepF-like_sf"/>
</dbReference>
<dbReference type="PANTHER" id="PTHR35798">
    <property type="entry name" value="CELL DIVISION PROTEIN SEPF"/>
    <property type="match status" value="1"/>
</dbReference>
<dbReference type="PANTHER" id="PTHR35798:SF1">
    <property type="entry name" value="CELL DIVISION PROTEIN SEPF"/>
    <property type="match status" value="1"/>
</dbReference>
<dbReference type="Pfam" id="PF04472">
    <property type="entry name" value="SepF"/>
    <property type="match status" value="1"/>
</dbReference>
<comment type="function">
    <text evidence="1">Cell division protein that is part of the divisome complex and is recruited early to the Z-ring. Probably stimulates Z-ring formation, perhaps through the cross-linking of FtsZ protofilaments. Its function overlaps with FtsA.</text>
</comment>
<comment type="subunit">
    <text evidence="1">Homodimer. Interacts with FtsZ.</text>
</comment>
<comment type="subcellular location">
    <subcellularLocation>
        <location evidence="1">Cytoplasm</location>
    </subcellularLocation>
    <text evidence="1">Localizes to the division site, in a FtsZ-dependent manner.</text>
</comment>
<comment type="similarity">
    <text evidence="1">Belongs to the SepF family.</text>
</comment>
<protein>
    <recommendedName>
        <fullName evidence="1">Cell division protein SepF</fullName>
    </recommendedName>
</protein>
<feature type="chain" id="PRO_1000164532" description="Cell division protein SepF">
    <location>
        <begin position="1"/>
        <end position="156"/>
    </location>
</feature>
<proteinExistence type="inferred from homology"/>
<keyword id="KW-0131">Cell cycle</keyword>
<keyword id="KW-0132">Cell division</keyword>
<keyword id="KW-0963">Cytoplasm</keyword>
<keyword id="KW-1185">Reference proteome</keyword>
<keyword id="KW-0717">Septation</keyword>
<gene>
    <name evidence="1" type="primary">sepF</name>
    <name type="ordered locus">Ccel_0597</name>
</gene>